<dbReference type="EC" id="7.6.2.15" evidence="1"/>
<dbReference type="EMBL" id="AE017223">
    <property type="protein sequence ID" value="AAX75062.1"/>
    <property type="molecule type" value="Genomic_DNA"/>
</dbReference>
<dbReference type="RefSeq" id="WP_002966959.1">
    <property type="nucleotide sequence ID" value="NC_006932.1"/>
</dbReference>
<dbReference type="SMR" id="Q57BC2"/>
<dbReference type="EnsemblBacteria" id="AAX75062">
    <property type="protein sequence ID" value="AAX75062"/>
    <property type="gene ID" value="BruAb1_1744"/>
</dbReference>
<dbReference type="GeneID" id="93017890"/>
<dbReference type="KEGG" id="bmb:BruAb1_1744"/>
<dbReference type="HOGENOM" id="CLU_000604_1_22_5"/>
<dbReference type="Proteomes" id="UP000000540">
    <property type="component" value="Chromosome I"/>
</dbReference>
<dbReference type="GO" id="GO:0005886">
    <property type="term" value="C:plasma membrane"/>
    <property type="evidence" value="ECO:0007669"/>
    <property type="project" value="UniProtKB-SubCell"/>
</dbReference>
<dbReference type="GO" id="GO:0048502">
    <property type="term" value="F:ABC-type thiamine transporter activity"/>
    <property type="evidence" value="ECO:0007669"/>
    <property type="project" value="UniProtKB-EC"/>
</dbReference>
<dbReference type="GO" id="GO:0005524">
    <property type="term" value="F:ATP binding"/>
    <property type="evidence" value="ECO:0007669"/>
    <property type="project" value="UniProtKB-KW"/>
</dbReference>
<dbReference type="GO" id="GO:0016887">
    <property type="term" value="F:ATP hydrolysis activity"/>
    <property type="evidence" value="ECO:0007669"/>
    <property type="project" value="InterPro"/>
</dbReference>
<dbReference type="CDD" id="cd03298">
    <property type="entry name" value="ABC_ThiQ_thiamine_transporter"/>
    <property type="match status" value="1"/>
</dbReference>
<dbReference type="Gene3D" id="3.40.50.300">
    <property type="entry name" value="P-loop containing nucleotide triphosphate hydrolases"/>
    <property type="match status" value="1"/>
</dbReference>
<dbReference type="InterPro" id="IPR003593">
    <property type="entry name" value="AAA+_ATPase"/>
</dbReference>
<dbReference type="InterPro" id="IPR050093">
    <property type="entry name" value="ABC_SmlMolc_Importer"/>
</dbReference>
<dbReference type="InterPro" id="IPR003439">
    <property type="entry name" value="ABC_transporter-like_ATP-bd"/>
</dbReference>
<dbReference type="InterPro" id="IPR017871">
    <property type="entry name" value="ABC_transporter-like_CS"/>
</dbReference>
<dbReference type="InterPro" id="IPR027417">
    <property type="entry name" value="P-loop_NTPase"/>
</dbReference>
<dbReference type="InterPro" id="IPR005968">
    <property type="entry name" value="Thiamine_ABC_ThiQ"/>
</dbReference>
<dbReference type="NCBIfam" id="TIGR01277">
    <property type="entry name" value="thiQ"/>
    <property type="match status" value="1"/>
</dbReference>
<dbReference type="PANTHER" id="PTHR42781">
    <property type="entry name" value="SPERMIDINE/PUTRESCINE IMPORT ATP-BINDING PROTEIN POTA"/>
    <property type="match status" value="1"/>
</dbReference>
<dbReference type="PANTHER" id="PTHR42781:SF1">
    <property type="entry name" value="THIAMINE IMPORT ATP-BINDING PROTEIN THIQ"/>
    <property type="match status" value="1"/>
</dbReference>
<dbReference type="Pfam" id="PF00005">
    <property type="entry name" value="ABC_tran"/>
    <property type="match status" value="1"/>
</dbReference>
<dbReference type="SMART" id="SM00382">
    <property type="entry name" value="AAA"/>
    <property type="match status" value="1"/>
</dbReference>
<dbReference type="SUPFAM" id="SSF52540">
    <property type="entry name" value="P-loop containing nucleoside triphosphate hydrolases"/>
    <property type="match status" value="1"/>
</dbReference>
<dbReference type="PROSITE" id="PS00211">
    <property type="entry name" value="ABC_TRANSPORTER_1"/>
    <property type="match status" value="1"/>
</dbReference>
<dbReference type="PROSITE" id="PS50893">
    <property type="entry name" value="ABC_TRANSPORTER_2"/>
    <property type="match status" value="1"/>
</dbReference>
<dbReference type="PROSITE" id="PS51288">
    <property type="entry name" value="THIQ"/>
    <property type="match status" value="1"/>
</dbReference>
<proteinExistence type="inferred from homology"/>
<organism>
    <name type="scientific">Brucella abortus biovar 1 (strain 9-941)</name>
    <dbReference type="NCBI Taxonomy" id="262698"/>
    <lineage>
        <taxon>Bacteria</taxon>
        <taxon>Pseudomonadati</taxon>
        <taxon>Pseudomonadota</taxon>
        <taxon>Alphaproteobacteria</taxon>
        <taxon>Hyphomicrobiales</taxon>
        <taxon>Brucellaceae</taxon>
        <taxon>Brucella/Ochrobactrum group</taxon>
        <taxon>Brucella</taxon>
    </lineage>
</organism>
<comment type="function">
    <text evidence="1">Part of the ABC transporter complex ThiBPQ involved in thiamine import. Responsible for energy coupling to the transport system.</text>
</comment>
<comment type="catalytic activity">
    <reaction evidence="1">
        <text>thiamine(out) + ATP + H2O = thiamine(in) + ADP + phosphate + H(+)</text>
        <dbReference type="Rhea" id="RHEA:29811"/>
        <dbReference type="ChEBI" id="CHEBI:15377"/>
        <dbReference type="ChEBI" id="CHEBI:15378"/>
        <dbReference type="ChEBI" id="CHEBI:18385"/>
        <dbReference type="ChEBI" id="CHEBI:30616"/>
        <dbReference type="ChEBI" id="CHEBI:43474"/>
        <dbReference type="ChEBI" id="CHEBI:456216"/>
        <dbReference type="EC" id="7.6.2.15"/>
    </reaction>
</comment>
<comment type="subunit">
    <text evidence="1">The complex is composed of two ATP-binding proteins (ThiQ), two transmembrane proteins (ThiP) and a solute-binding protein (ThiB).</text>
</comment>
<comment type="subcellular location">
    <subcellularLocation>
        <location evidence="1">Cell inner membrane</location>
        <topology evidence="1">Peripheral membrane protein</topology>
    </subcellularLocation>
</comment>
<comment type="similarity">
    <text evidence="1">Belongs to the ABC transporter superfamily. Thiamine importer (TC 3.A.1.19.1) family.</text>
</comment>
<protein>
    <recommendedName>
        <fullName evidence="1">Thiamine import ATP-binding protein ThiQ</fullName>
        <ecNumber evidence="1">7.6.2.15</ecNumber>
    </recommendedName>
</protein>
<gene>
    <name evidence="1" type="primary">thiQ</name>
    <name type="ordered locus">BruAb1_1744</name>
</gene>
<name>THIQ_BRUAB</name>
<keyword id="KW-0067">ATP-binding</keyword>
<keyword id="KW-0997">Cell inner membrane</keyword>
<keyword id="KW-1003">Cell membrane</keyword>
<keyword id="KW-0472">Membrane</keyword>
<keyword id="KW-0547">Nucleotide-binding</keyword>
<keyword id="KW-1278">Translocase</keyword>
<keyword id="KW-0813">Transport</keyword>
<accession>Q57BC2</accession>
<feature type="chain" id="PRO_0000274433" description="Thiamine import ATP-binding protein ThiQ">
    <location>
        <begin position="1"/>
        <end position="241"/>
    </location>
</feature>
<feature type="domain" description="ABC transporter" evidence="1">
    <location>
        <begin position="7"/>
        <end position="235"/>
    </location>
</feature>
<feature type="binding site" evidence="1">
    <location>
        <begin position="37"/>
        <end position="44"/>
    </location>
    <ligand>
        <name>ATP</name>
        <dbReference type="ChEBI" id="CHEBI:30616"/>
    </ligand>
</feature>
<reference key="1">
    <citation type="journal article" date="2005" name="J. Bacteriol.">
        <title>Completion of the genome sequence of Brucella abortus and comparison to the highly similar genomes of Brucella melitensis and Brucella suis.</title>
        <authorList>
            <person name="Halling S.M."/>
            <person name="Peterson-Burch B.D."/>
            <person name="Bricker B.J."/>
            <person name="Zuerner R.L."/>
            <person name="Qing Z."/>
            <person name="Li L.-L."/>
            <person name="Kapur V."/>
            <person name="Alt D.P."/>
            <person name="Olsen S.C."/>
        </authorList>
    </citation>
    <scope>NUCLEOTIDE SEQUENCE [LARGE SCALE GENOMIC DNA]</scope>
    <source>
        <strain>9-941</strain>
    </source>
</reference>
<sequence length="241" mass="26187">MTASADIRLSDVRFSYGETAMHFDVTITGGEIAAIVGPSGSGKSTFLNLIAGFETPQSGIISINGVDVTHLPLADRPVSMVFQENNLFAHLTVEQNVDLGRSPNLRLNEEDRKAVASALARVGLQGKEKRKPEALSGGERQRVAIARVLVRERPVLLLDEAFASLGPALRHQMLDLVNKLRRETGMTVLMVTHTPEDALHLDALLIFLDNGKIAAQGPATEMLSRAGPEALRHYIGEMRSF</sequence>
<evidence type="ECO:0000255" key="1">
    <source>
        <dbReference type="HAMAP-Rule" id="MF_01723"/>
    </source>
</evidence>